<evidence type="ECO:0000250" key="1"/>
<evidence type="ECO:0000305" key="2"/>
<proteinExistence type="inferred from homology"/>
<sequence length="424" mass="48132">MGYNIPRGTQDILPGESDRWQFVEQIMRDTCRTYQYKEIRTPIFEHTELFARGVGESTDIVQKEMYTFEDRKGRSLTLRPEGTAAAVRAFNENKLFANPVQPTKLYYVGPMFRYERPQTGRYRQFYQFGIEAIGSKDPAIDAEVMALAMSIYEKAGLENVKLVINSLGDQDSRKSYREALVKHFEPRIEEFCSDCQSRLHTNPLRILDCKKDRDHELMKSAPSILTYLNEESAAYFEKVKQYLNDLGISYEIDPNLVRGLDYYNHTAFEIMSNAEGFGAITTLAGGGRYDGLVEQIGGPEAPGIGFAMSIERLLAAIDAEKRELPVDKGIDCYIVTLGEKAKDYSVSLVYKLREAGISSEIDYENKKMKGQFKTADRLKARFIAILGEDELAQNKINVKDAQTGEQIEVALDEFIHVMKANQKG</sequence>
<accession>O32039</accession>
<comment type="catalytic activity">
    <reaction>
        <text>tRNA(His) + L-histidine + ATP = L-histidyl-tRNA(His) + AMP + diphosphate + H(+)</text>
        <dbReference type="Rhea" id="RHEA:17313"/>
        <dbReference type="Rhea" id="RHEA-COMP:9665"/>
        <dbReference type="Rhea" id="RHEA-COMP:9689"/>
        <dbReference type="ChEBI" id="CHEBI:15378"/>
        <dbReference type="ChEBI" id="CHEBI:30616"/>
        <dbReference type="ChEBI" id="CHEBI:33019"/>
        <dbReference type="ChEBI" id="CHEBI:57595"/>
        <dbReference type="ChEBI" id="CHEBI:78442"/>
        <dbReference type="ChEBI" id="CHEBI:78527"/>
        <dbReference type="ChEBI" id="CHEBI:456215"/>
        <dbReference type="EC" id="6.1.1.21"/>
    </reaction>
</comment>
<comment type="subunit">
    <text evidence="1">Homodimer.</text>
</comment>
<comment type="subcellular location">
    <subcellularLocation>
        <location evidence="1">Cytoplasm</location>
    </subcellularLocation>
</comment>
<comment type="similarity">
    <text evidence="2">Belongs to the class-II aminoacyl-tRNA synthetase family.</text>
</comment>
<organism>
    <name type="scientific">Bacillus subtilis (strain 168)</name>
    <dbReference type="NCBI Taxonomy" id="224308"/>
    <lineage>
        <taxon>Bacteria</taxon>
        <taxon>Bacillati</taxon>
        <taxon>Bacillota</taxon>
        <taxon>Bacilli</taxon>
        <taxon>Bacillales</taxon>
        <taxon>Bacillaceae</taxon>
        <taxon>Bacillus</taxon>
    </lineage>
</organism>
<protein>
    <recommendedName>
        <fullName>Histidine--tRNA ligase</fullName>
        <ecNumber>6.1.1.21</ecNumber>
    </recommendedName>
    <alternativeName>
        <fullName>Histidyl-tRNA synthetase</fullName>
        <shortName>HisRS</shortName>
    </alternativeName>
</protein>
<name>SYH_BACSU</name>
<reference key="1">
    <citation type="journal article" date="1997" name="Nature">
        <title>The complete genome sequence of the Gram-positive bacterium Bacillus subtilis.</title>
        <authorList>
            <person name="Kunst F."/>
            <person name="Ogasawara N."/>
            <person name="Moszer I."/>
            <person name="Albertini A.M."/>
            <person name="Alloni G."/>
            <person name="Azevedo V."/>
            <person name="Bertero M.G."/>
            <person name="Bessieres P."/>
            <person name="Bolotin A."/>
            <person name="Borchert S."/>
            <person name="Borriss R."/>
            <person name="Boursier L."/>
            <person name="Brans A."/>
            <person name="Braun M."/>
            <person name="Brignell S.C."/>
            <person name="Bron S."/>
            <person name="Brouillet S."/>
            <person name="Bruschi C.V."/>
            <person name="Caldwell B."/>
            <person name="Capuano V."/>
            <person name="Carter N.M."/>
            <person name="Choi S.-K."/>
            <person name="Codani J.-J."/>
            <person name="Connerton I.F."/>
            <person name="Cummings N.J."/>
            <person name="Daniel R.A."/>
            <person name="Denizot F."/>
            <person name="Devine K.M."/>
            <person name="Duesterhoeft A."/>
            <person name="Ehrlich S.D."/>
            <person name="Emmerson P.T."/>
            <person name="Entian K.-D."/>
            <person name="Errington J."/>
            <person name="Fabret C."/>
            <person name="Ferrari E."/>
            <person name="Foulger D."/>
            <person name="Fritz C."/>
            <person name="Fujita M."/>
            <person name="Fujita Y."/>
            <person name="Fuma S."/>
            <person name="Galizzi A."/>
            <person name="Galleron N."/>
            <person name="Ghim S.-Y."/>
            <person name="Glaser P."/>
            <person name="Goffeau A."/>
            <person name="Golightly E.J."/>
            <person name="Grandi G."/>
            <person name="Guiseppi G."/>
            <person name="Guy B.J."/>
            <person name="Haga K."/>
            <person name="Haiech J."/>
            <person name="Harwood C.R."/>
            <person name="Henaut A."/>
            <person name="Hilbert H."/>
            <person name="Holsappel S."/>
            <person name="Hosono S."/>
            <person name="Hullo M.-F."/>
            <person name="Itaya M."/>
            <person name="Jones L.-M."/>
            <person name="Joris B."/>
            <person name="Karamata D."/>
            <person name="Kasahara Y."/>
            <person name="Klaerr-Blanchard M."/>
            <person name="Klein C."/>
            <person name="Kobayashi Y."/>
            <person name="Koetter P."/>
            <person name="Koningstein G."/>
            <person name="Krogh S."/>
            <person name="Kumano M."/>
            <person name="Kurita K."/>
            <person name="Lapidus A."/>
            <person name="Lardinois S."/>
            <person name="Lauber J."/>
            <person name="Lazarevic V."/>
            <person name="Lee S.-M."/>
            <person name="Levine A."/>
            <person name="Liu H."/>
            <person name="Masuda S."/>
            <person name="Mauel C."/>
            <person name="Medigue C."/>
            <person name="Medina N."/>
            <person name="Mellado R.P."/>
            <person name="Mizuno M."/>
            <person name="Moestl D."/>
            <person name="Nakai S."/>
            <person name="Noback M."/>
            <person name="Noone D."/>
            <person name="O'Reilly M."/>
            <person name="Ogawa K."/>
            <person name="Ogiwara A."/>
            <person name="Oudega B."/>
            <person name="Park S.-H."/>
            <person name="Parro V."/>
            <person name="Pohl T.M."/>
            <person name="Portetelle D."/>
            <person name="Porwollik S."/>
            <person name="Prescott A.M."/>
            <person name="Presecan E."/>
            <person name="Pujic P."/>
            <person name="Purnelle B."/>
            <person name="Rapoport G."/>
            <person name="Rey M."/>
            <person name="Reynolds S."/>
            <person name="Rieger M."/>
            <person name="Rivolta C."/>
            <person name="Rocha E."/>
            <person name="Roche B."/>
            <person name="Rose M."/>
            <person name="Sadaie Y."/>
            <person name="Sato T."/>
            <person name="Scanlan E."/>
            <person name="Schleich S."/>
            <person name="Schroeter R."/>
            <person name="Scoffone F."/>
            <person name="Sekiguchi J."/>
            <person name="Sekowska A."/>
            <person name="Seror S.J."/>
            <person name="Serror P."/>
            <person name="Shin B.-S."/>
            <person name="Soldo B."/>
            <person name="Sorokin A."/>
            <person name="Tacconi E."/>
            <person name="Takagi T."/>
            <person name="Takahashi H."/>
            <person name="Takemaru K."/>
            <person name="Takeuchi M."/>
            <person name="Tamakoshi A."/>
            <person name="Tanaka T."/>
            <person name="Terpstra P."/>
            <person name="Tognoni A."/>
            <person name="Tosato V."/>
            <person name="Uchiyama S."/>
            <person name="Vandenbol M."/>
            <person name="Vannier F."/>
            <person name="Vassarotti A."/>
            <person name="Viari A."/>
            <person name="Wambutt R."/>
            <person name="Wedler E."/>
            <person name="Wedler H."/>
            <person name="Weitzenegger T."/>
            <person name="Winters P."/>
            <person name="Wipat A."/>
            <person name="Yamamoto H."/>
            <person name="Yamane K."/>
            <person name="Yasumoto K."/>
            <person name="Yata K."/>
            <person name="Yoshida K."/>
            <person name="Yoshikawa H.-F."/>
            <person name="Zumstein E."/>
            <person name="Yoshikawa H."/>
            <person name="Danchin A."/>
        </authorList>
    </citation>
    <scope>NUCLEOTIDE SEQUENCE [LARGE SCALE GENOMIC DNA]</scope>
    <source>
        <strain>168</strain>
    </source>
</reference>
<feature type="chain" id="PRO_0000136105" description="Histidine--tRNA ligase">
    <location>
        <begin position="1"/>
        <end position="424"/>
    </location>
</feature>
<dbReference type="EC" id="6.1.1.21"/>
<dbReference type="EMBL" id="AL009126">
    <property type="protein sequence ID" value="CAB14715.1"/>
    <property type="molecule type" value="Genomic_DNA"/>
</dbReference>
<dbReference type="PIR" id="G69641">
    <property type="entry name" value="G69641"/>
</dbReference>
<dbReference type="RefSeq" id="NP_390634.1">
    <property type="nucleotide sequence ID" value="NC_000964.3"/>
</dbReference>
<dbReference type="RefSeq" id="WP_003229755.1">
    <property type="nucleotide sequence ID" value="NZ_OZ025638.1"/>
</dbReference>
<dbReference type="SMR" id="O32039"/>
<dbReference type="FunCoup" id="O32039">
    <property type="interactions" value="678"/>
</dbReference>
<dbReference type="IntAct" id="O32039">
    <property type="interactions" value="1"/>
</dbReference>
<dbReference type="MINT" id="O32039"/>
<dbReference type="STRING" id="224308.BSU27560"/>
<dbReference type="jPOST" id="O32039"/>
<dbReference type="PaxDb" id="224308-BSU27560"/>
<dbReference type="EnsemblBacteria" id="CAB14715">
    <property type="protein sequence ID" value="CAB14715"/>
    <property type="gene ID" value="BSU_27560"/>
</dbReference>
<dbReference type="GeneID" id="938617"/>
<dbReference type="KEGG" id="bsu:BSU27560"/>
<dbReference type="PATRIC" id="fig|224308.179.peg.2995"/>
<dbReference type="eggNOG" id="COG0124">
    <property type="taxonomic scope" value="Bacteria"/>
</dbReference>
<dbReference type="InParanoid" id="O32039"/>
<dbReference type="OrthoDB" id="9800814at2"/>
<dbReference type="PhylomeDB" id="O32039"/>
<dbReference type="BioCyc" id="BSUB:BSU27560-MONOMER"/>
<dbReference type="Proteomes" id="UP000001570">
    <property type="component" value="Chromosome"/>
</dbReference>
<dbReference type="GO" id="GO:0005737">
    <property type="term" value="C:cytoplasm"/>
    <property type="evidence" value="ECO:0007669"/>
    <property type="project" value="UniProtKB-SubCell"/>
</dbReference>
<dbReference type="GO" id="GO:0005524">
    <property type="term" value="F:ATP binding"/>
    <property type="evidence" value="ECO:0007669"/>
    <property type="project" value="UniProtKB-UniRule"/>
</dbReference>
<dbReference type="GO" id="GO:0140096">
    <property type="term" value="F:catalytic activity, acting on a protein"/>
    <property type="evidence" value="ECO:0007669"/>
    <property type="project" value="UniProtKB-ARBA"/>
</dbReference>
<dbReference type="GO" id="GO:0004821">
    <property type="term" value="F:histidine-tRNA ligase activity"/>
    <property type="evidence" value="ECO:0000318"/>
    <property type="project" value="GO_Central"/>
</dbReference>
<dbReference type="GO" id="GO:0016740">
    <property type="term" value="F:transferase activity"/>
    <property type="evidence" value="ECO:0007669"/>
    <property type="project" value="UniProtKB-ARBA"/>
</dbReference>
<dbReference type="GO" id="GO:0006427">
    <property type="term" value="P:histidyl-tRNA aminoacylation"/>
    <property type="evidence" value="ECO:0000318"/>
    <property type="project" value="GO_Central"/>
</dbReference>
<dbReference type="CDD" id="cd00773">
    <property type="entry name" value="HisRS-like_core"/>
    <property type="match status" value="1"/>
</dbReference>
<dbReference type="CDD" id="cd00859">
    <property type="entry name" value="HisRS_anticodon"/>
    <property type="match status" value="1"/>
</dbReference>
<dbReference type="FunFam" id="3.30.930.10:FF:000005">
    <property type="entry name" value="Histidine--tRNA ligase"/>
    <property type="match status" value="1"/>
</dbReference>
<dbReference type="FunFam" id="3.40.50.800:FF:000013">
    <property type="entry name" value="Histidine--tRNA ligase"/>
    <property type="match status" value="1"/>
</dbReference>
<dbReference type="Gene3D" id="3.40.50.800">
    <property type="entry name" value="Anticodon-binding domain"/>
    <property type="match status" value="1"/>
</dbReference>
<dbReference type="Gene3D" id="3.30.930.10">
    <property type="entry name" value="Bira Bifunctional Protein, Domain 2"/>
    <property type="match status" value="1"/>
</dbReference>
<dbReference type="HAMAP" id="MF_00127">
    <property type="entry name" value="His_tRNA_synth"/>
    <property type="match status" value="1"/>
</dbReference>
<dbReference type="InterPro" id="IPR006195">
    <property type="entry name" value="aa-tRNA-synth_II"/>
</dbReference>
<dbReference type="InterPro" id="IPR045864">
    <property type="entry name" value="aa-tRNA-synth_II/BPL/LPL"/>
</dbReference>
<dbReference type="InterPro" id="IPR004154">
    <property type="entry name" value="Anticodon-bd"/>
</dbReference>
<dbReference type="InterPro" id="IPR036621">
    <property type="entry name" value="Anticodon-bd_dom_sf"/>
</dbReference>
<dbReference type="InterPro" id="IPR015807">
    <property type="entry name" value="His-tRNA-ligase"/>
</dbReference>
<dbReference type="InterPro" id="IPR041715">
    <property type="entry name" value="HisRS-like_core"/>
</dbReference>
<dbReference type="InterPro" id="IPR004516">
    <property type="entry name" value="HisRS/HisZ"/>
</dbReference>
<dbReference type="InterPro" id="IPR033656">
    <property type="entry name" value="HisRS_anticodon"/>
</dbReference>
<dbReference type="NCBIfam" id="TIGR00442">
    <property type="entry name" value="hisS"/>
    <property type="match status" value="1"/>
</dbReference>
<dbReference type="PANTHER" id="PTHR43707:SF1">
    <property type="entry name" value="HISTIDINE--TRNA LIGASE, MITOCHONDRIAL-RELATED"/>
    <property type="match status" value="1"/>
</dbReference>
<dbReference type="PANTHER" id="PTHR43707">
    <property type="entry name" value="HISTIDYL-TRNA SYNTHETASE"/>
    <property type="match status" value="1"/>
</dbReference>
<dbReference type="Pfam" id="PF03129">
    <property type="entry name" value="HGTP_anticodon"/>
    <property type="match status" value="1"/>
</dbReference>
<dbReference type="Pfam" id="PF13393">
    <property type="entry name" value="tRNA-synt_His"/>
    <property type="match status" value="1"/>
</dbReference>
<dbReference type="PIRSF" id="PIRSF001549">
    <property type="entry name" value="His-tRNA_synth"/>
    <property type="match status" value="1"/>
</dbReference>
<dbReference type="SUPFAM" id="SSF52954">
    <property type="entry name" value="Class II aaRS ABD-related"/>
    <property type="match status" value="1"/>
</dbReference>
<dbReference type="SUPFAM" id="SSF55681">
    <property type="entry name" value="Class II aaRS and biotin synthetases"/>
    <property type="match status" value="1"/>
</dbReference>
<dbReference type="PROSITE" id="PS50862">
    <property type="entry name" value="AA_TRNA_LIGASE_II"/>
    <property type="match status" value="1"/>
</dbReference>
<keyword id="KW-0030">Aminoacyl-tRNA synthetase</keyword>
<keyword id="KW-0067">ATP-binding</keyword>
<keyword id="KW-0963">Cytoplasm</keyword>
<keyword id="KW-0436">Ligase</keyword>
<keyword id="KW-0547">Nucleotide-binding</keyword>
<keyword id="KW-0648">Protein biosynthesis</keyword>
<keyword id="KW-1185">Reference proteome</keyword>
<gene>
    <name type="primary">hisS</name>
    <name type="ordered locus">BSU27560</name>
</gene>